<name>ZUPT_ECOBW</name>
<dbReference type="EMBL" id="CP001396">
    <property type="protein sequence ID" value="ACR65791.1"/>
    <property type="molecule type" value="Genomic_DNA"/>
</dbReference>
<dbReference type="RefSeq" id="WP_001295627.1">
    <property type="nucleotide sequence ID" value="NC_012759.1"/>
</dbReference>
<dbReference type="SMR" id="C4ZQV8"/>
<dbReference type="GeneID" id="93778954"/>
<dbReference type="KEGG" id="ebw:BWG_2752"/>
<dbReference type="HOGENOM" id="CLU_015114_1_3_6"/>
<dbReference type="GO" id="GO:0005886">
    <property type="term" value="C:plasma membrane"/>
    <property type="evidence" value="ECO:0007669"/>
    <property type="project" value="UniProtKB-SubCell"/>
</dbReference>
<dbReference type="GO" id="GO:0046872">
    <property type="term" value="F:metal ion binding"/>
    <property type="evidence" value="ECO:0007669"/>
    <property type="project" value="UniProtKB-KW"/>
</dbReference>
<dbReference type="GO" id="GO:0005385">
    <property type="term" value="F:zinc ion transmembrane transporter activity"/>
    <property type="evidence" value="ECO:0007669"/>
    <property type="project" value="UniProtKB-UniRule"/>
</dbReference>
<dbReference type="HAMAP" id="MF_00548">
    <property type="entry name" value="ZupT"/>
    <property type="match status" value="1"/>
</dbReference>
<dbReference type="InterPro" id="IPR003689">
    <property type="entry name" value="ZIP"/>
</dbReference>
<dbReference type="InterPro" id="IPR023498">
    <property type="entry name" value="Zn_transptr_ZupT"/>
</dbReference>
<dbReference type="NCBIfam" id="NF003243">
    <property type="entry name" value="PRK04201.1"/>
    <property type="match status" value="1"/>
</dbReference>
<dbReference type="PANTHER" id="PTHR11040:SF205">
    <property type="entry name" value="ZINC TRANSPORTER ZUPT"/>
    <property type="match status" value="1"/>
</dbReference>
<dbReference type="PANTHER" id="PTHR11040">
    <property type="entry name" value="ZINC/IRON TRANSPORTER"/>
    <property type="match status" value="1"/>
</dbReference>
<dbReference type="Pfam" id="PF02535">
    <property type="entry name" value="Zip"/>
    <property type="match status" value="2"/>
</dbReference>
<keyword id="KW-0997">Cell inner membrane</keyword>
<keyword id="KW-1003">Cell membrane</keyword>
<keyword id="KW-0406">Ion transport</keyword>
<keyword id="KW-0408">Iron</keyword>
<keyword id="KW-0472">Membrane</keyword>
<keyword id="KW-0479">Metal-binding</keyword>
<keyword id="KW-0812">Transmembrane</keyword>
<keyword id="KW-1133">Transmembrane helix</keyword>
<keyword id="KW-0813">Transport</keyword>
<keyword id="KW-0862">Zinc</keyword>
<keyword id="KW-0864">Zinc transport</keyword>
<accession>C4ZQV8</accession>
<organism>
    <name type="scientific">Escherichia coli (strain K12 / MC4100 / BW2952)</name>
    <dbReference type="NCBI Taxonomy" id="595496"/>
    <lineage>
        <taxon>Bacteria</taxon>
        <taxon>Pseudomonadati</taxon>
        <taxon>Pseudomonadota</taxon>
        <taxon>Gammaproteobacteria</taxon>
        <taxon>Enterobacterales</taxon>
        <taxon>Enterobacteriaceae</taxon>
        <taxon>Escherichia</taxon>
    </lineage>
</organism>
<sequence length="257" mass="26485">MSVPLILTILAGAATFIGAFLGVLGQKPSNRLLAFSLGFAAGIMLLISLMEMLPAALAAEGMSPVLGYGMFIFGLLGYFGLDRMLPHAHPQDLMQKSVQPLPKSIKRTAILLTLGISLHNFPEGIATFVTASSNLELGFGIALAVALHNIPEGLAVAGPVYAATGSKRTAILWAGISGLAEILGGVLAWLILGSMISPVVMAAIMAAVAGIMVALSVDELMPLAKEIDPNNNPSYGVLCGMSVMGFSLVLLQTAGIG</sequence>
<proteinExistence type="inferred from homology"/>
<feature type="chain" id="PRO_1000211976" description="Zinc transporter ZupT">
    <location>
        <begin position="1"/>
        <end position="257"/>
    </location>
</feature>
<feature type="transmembrane region" description="Helical" evidence="1">
    <location>
        <begin position="5"/>
        <end position="25"/>
    </location>
</feature>
<feature type="transmembrane region" description="Helical" evidence="1">
    <location>
        <begin position="32"/>
        <end position="52"/>
    </location>
</feature>
<feature type="transmembrane region" description="Helical" evidence="1">
    <location>
        <begin position="61"/>
        <end position="81"/>
    </location>
</feature>
<feature type="transmembrane region" description="Helical" evidence="1">
    <location>
        <begin position="137"/>
        <end position="157"/>
    </location>
</feature>
<feature type="transmembrane region" description="Helical" evidence="1">
    <location>
        <begin position="171"/>
        <end position="191"/>
    </location>
</feature>
<feature type="transmembrane region" description="Helical" evidence="1">
    <location>
        <begin position="195"/>
        <end position="215"/>
    </location>
</feature>
<feature type="transmembrane region" description="Helical" evidence="1">
    <location>
        <begin position="236"/>
        <end position="256"/>
    </location>
</feature>
<feature type="binding site" description="M2 metal binding site" evidence="1">
    <location>
        <position position="120"/>
    </location>
    <ligand>
        <name>Fe(2+)</name>
        <dbReference type="ChEBI" id="CHEBI:29033"/>
    </ligand>
</feature>
<feature type="binding site" description="M2 metal binding site" evidence="1">
    <location>
        <position position="123"/>
    </location>
    <ligand>
        <name>Fe(2+)</name>
        <dbReference type="ChEBI" id="CHEBI:29033"/>
    </ligand>
</feature>
<feature type="binding site" description="M1 metal binding site" evidence="1">
    <location>
        <position position="123"/>
    </location>
    <ligand>
        <name>Zn(2+)</name>
        <dbReference type="ChEBI" id="CHEBI:29105"/>
    </ligand>
</feature>
<feature type="binding site" description="M1 metal binding site" evidence="1">
    <location>
        <position position="148"/>
    </location>
    <ligand>
        <name>Zn(2+)</name>
        <dbReference type="ChEBI" id="CHEBI:29105"/>
    </ligand>
</feature>
<feature type="binding site" description="M2 metal binding site" evidence="1">
    <location>
        <position position="149"/>
    </location>
    <ligand>
        <name>Fe(2+)</name>
        <dbReference type="ChEBI" id="CHEBI:29033"/>
    </ligand>
</feature>
<feature type="binding site" description="M2 metal binding site" evidence="1">
    <location>
        <position position="152"/>
    </location>
    <ligand>
        <name>Fe(2+)</name>
        <dbReference type="ChEBI" id="CHEBI:29033"/>
    </ligand>
</feature>
<feature type="binding site" description="M1 metal binding site" evidence="1">
    <location>
        <position position="152"/>
    </location>
    <ligand>
        <name>Zn(2+)</name>
        <dbReference type="ChEBI" id="CHEBI:29105"/>
    </ligand>
</feature>
<feature type="binding site" description="M2 metal binding site" evidence="1">
    <location>
        <position position="181"/>
    </location>
    <ligand>
        <name>Fe(2+)</name>
        <dbReference type="ChEBI" id="CHEBI:29033"/>
    </ligand>
</feature>
<gene>
    <name evidence="1" type="primary">zupT</name>
    <name type="ordered locus">BWG_2752</name>
</gene>
<evidence type="ECO:0000255" key="1">
    <source>
        <dbReference type="HAMAP-Rule" id="MF_00548"/>
    </source>
</evidence>
<protein>
    <recommendedName>
        <fullName evidence="1">Zinc transporter ZupT</fullName>
    </recommendedName>
</protein>
<comment type="function">
    <text evidence="1">Mediates zinc uptake. May also transport other divalent cations.</text>
</comment>
<comment type="catalytic activity">
    <reaction evidence="1">
        <text>Zn(2+)(in) = Zn(2+)(out)</text>
        <dbReference type="Rhea" id="RHEA:29351"/>
        <dbReference type="ChEBI" id="CHEBI:29105"/>
    </reaction>
</comment>
<comment type="subcellular location">
    <subcellularLocation>
        <location evidence="1">Cell inner membrane</location>
        <topology evidence="1">Multi-pass membrane protein</topology>
    </subcellularLocation>
</comment>
<comment type="similarity">
    <text evidence="1">Belongs to the ZIP transporter (TC 2.A.5) family. ZupT subfamily.</text>
</comment>
<reference key="1">
    <citation type="journal article" date="2009" name="J. Bacteriol.">
        <title>Genomic sequencing reveals regulatory mutations and recombinational events in the widely used MC4100 lineage of Escherichia coli K-12.</title>
        <authorList>
            <person name="Ferenci T."/>
            <person name="Zhou Z."/>
            <person name="Betteridge T."/>
            <person name="Ren Y."/>
            <person name="Liu Y."/>
            <person name="Feng L."/>
            <person name="Reeves P.R."/>
            <person name="Wang L."/>
        </authorList>
    </citation>
    <scope>NUCLEOTIDE SEQUENCE [LARGE SCALE GENOMIC DNA]</scope>
    <source>
        <strain>K12 / MC4100 / BW2952</strain>
    </source>
</reference>